<sequence>MPLVRFKIRNELSLGGPEIQRSASVEDEEPKAILGAVEVAGLIGILRQLGDLAEFSAEVFNGLQEEVTVTASRCQKLTSRVRRIESALSPLEKAVLSQTSHIHFAYTAGSEWHPRIRNGHSHFVQSDLPLCVMESYEQCRDPPPLHLLDRFAVGGPGSCLRKYSDPTFFRKELSNPSKTDDIKVQRDQAHRKRKKKRLPQRNICRSNAVSTSDETNGAHLSSFTDDRPTTSRSTSTVDMPRSSNMQDLSDIVDQSYLQGQSGAQEQSEAQVQSDFQESSKARDSITGSGYIEYVINQSPVDKPEVKLVEGFLSGSLCPADRIGSTVPEGCIEVVDDNILYSPSEDLLVPSASNVCDEKKETLESMVEKSRKDDEPSELHESKFGPVTPDRVRQNQRDFDRTYILFDEVDIVGEKQSKSQANNIDGTLGIENEGEDKSEQESEADEFVDARNTIESESESDIDGVPKPKLEHYFGDISTYCSEDANSDNNDGSEDITYEEMAHDPRHENSEDESCSGSYLPEDSNVSSCLSDPVCEETLFHDENSQKPWEFFTMCPSLLAEKAVPDVTILREEPVMAHPLFAGDSANEKISSEERIISCPSLKDAIPAEKILPEEHLVNYPSLEAIPHEKILPGESIAKYPSFAEIIPQEKILSEKSLEEAVLDNMTPAGEPDAAHPSFPKAVQDKKISPEVLDSKIFSVPKAVSQEPISLEEFVRIHPCLAEAVPDERFLIEEPPSTCLSLTKAMPTEILLPEKTLESSHYLEELPEEDILQEKSVDSTHPSCAKAAAETNLSPEVLDSTKLSVAEAVPQEQVSLEEFVGINPCLVEAVPDERLLPEEPDTTYLSLTKAVAIEKVLSEELLETYPSLAELPEEEFLQEETDDATHTSEAVSDEEISQEVSDSTNLSLEEALPLEHISHEEFVGIDQCLVEVAPEERFLPEEPVITCLSLTMEGVLSEKSPETYPSLSELPEEKILDEEADDAMHPCLSEAVSDEQSSPNVLGSTNSPVAEAVPQAQISVEEFVGIDPCLVEAVPDMRDLPEEHITSCIYLTNVVPIEEVLPEEPFEACASLGKLPKDKISQEESDEATHTLSCAKAESDEHVSLEVLNSTNLSAAEAIPNEQVTLDEFVGIDPCLGEVVLDEEVLPEQLDTTCRSLTKAAPIMTIFPEEPPEVYPSLEELPEEKIAQEEEVDDATHPYFSEAVCDEKIPPLEDPGSTHPSLEESVPYEEASHEELVGTNPFLESAFPNEIGFPDEPGVTYRSSAEAVSKEKNLPEESLPTYPSWAEVVPDEKISREELDSTYPSSAEAVFDENISGSEAPGSTTETGRQNKTFPEKTFATENSLNEAVFDEKIPGSEASTSTTETGPHNKTFPEEPFAMENFLNEAVFDEKIPGSEAPVSTTETGLHNETFTEEPVATDISLNEAVFGEIIPGSEAPGSATETGLHNKTFPEKPFATDLSLKEAVFDEKIPGSEASSSTTETSPHNKTFPRETITTDLSSTEAVFDEKITGSGVPSFTTETGSHNKCFPEEPVPKENILPKEPAAAYLALAEGIPDQKVFLDDAALLLFAEAIFDQKFSPEVPDSTYPSLKEPEMHVAAPCVVTDLPAKNIKVKEGEVHNEPYTASDVSMNQKSGLLEPESTERTFPSSGGTVTISPDTQNSLPNGTSVESISIWSNGGLLGLAPLKPPVFAEPNSGSQHIKHEINEASVLSTRKQESSSRSVENAEKSSLPLIVSDPTSQQQSNMSSLSPMQSTGTSFRVFGLSHRLLMAGFRGNSSSTCKFESVPSSSYDTRVAAIEDRTQQSPGGSSFEEQLDYESSLFGSPTSSPPVEHMKISFNPIEASPVPKLKLRIPCQPRYNGENADMFPSFQLVPEASNSDDGDDNSDTFCQSSPCVSDYCLSDSELWESDESPRISVSSLKQVEERSRHGDMGSFSGSFLDLPCYDAVDHQSTFSRLEQEQVPEYKPSVSEIIRAWPPNQPKSSPCNEANVDANTVSKKTQDQSLGLVATDDEGGDSVCLDEHKTKGI</sequence>
<name>SCARL_ARATH</name>
<gene>
    <name type="primary">WAVE5</name>
    <name type="ordered locus">At4g18600</name>
    <name type="ORF">F28J12.260</name>
</gene>
<comment type="subunit">
    <text evidence="3">Interacts with ABI1 and ABI2.</text>
</comment>
<comment type="tissue specificity">
    <text evidence="2">Expressed in expanding cotyledons, expanding leaves and expanding siliques containing developing embryos. Detected in unopened flower buds. Reduced expression in mature leaves.</text>
</comment>
<comment type="domain">
    <text>Contains the N-terminal Scar homology domain (SHD), but unlike the genuine SCAR proteins, lacks the C-terminal VCA (verprolin homology/cofilin homology/acidic) domain.</text>
</comment>
<comment type="similarity">
    <text evidence="4">Belongs to the SCAR/WAVE family.</text>
</comment>
<comment type="sequence caution" evidence="4">
    <conflict type="erroneous gene model prediction">
        <sequence resource="EMBL-CDS" id="CAA16740"/>
    </conflict>
</comment>
<comment type="sequence caution" evidence="4">
    <conflict type="erroneous gene model prediction">
        <sequence resource="EMBL-CDS" id="CAB78862"/>
    </conflict>
</comment>
<feature type="chain" id="PRO_0000189008" description="Scar-like domain-containing protein WAVE 5">
    <location>
        <begin position="1"/>
        <end position="2028"/>
    </location>
</feature>
<feature type="region of interest" description="Disordered" evidence="1">
    <location>
        <begin position="171"/>
        <end position="244"/>
    </location>
</feature>
<feature type="region of interest" description="Disordered" evidence="1">
    <location>
        <begin position="258"/>
        <end position="283"/>
    </location>
</feature>
<feature type="region of interest" description="Disordered" evidence="1">
    <location>
        <begin position="366"/>
        <end position="390"/>
    </location>
</feature>
<feature type="region of interest" description="Disordered" evidence="1">
    <location>
        <begin position="416"/>
        <end position="443"/>
    </location>
</feature>
<feature type="region of interest" description="Disordered" evidence="1">
    <location>
        <begin position="877"/>
        <end position="903"/>
    </location>
</feature>
<feature type="region of interest" description="Disordered" evidence="1">
    <location>
        <begin position="1469"/>
        <end position="1491"/>
    </location>
</feature>
<feature type="region of interest" description="Disordered" evidence="1">
    <location>
        <begin position="1511"/>
        <end position="1536"/>
    </location>
</feature>
<feature type="region of interest" description="Disordered" evidence="1">
    <location>
        <begin position="1639"/>
        <end position="1663"/>
    </location>
</feature>
<feature type="region of interest" description="Disordered" evidence="1">
    <location>
        <begin position="1710"/>
        <end position="1754"/>
    </location>
</feature>
<feature type="region of interest" description="Disordered" evidence="1">
    <location>
        <begin position="1911"/>
        <end position="1931"/>
    </location>
</feature>
<feature type="region of interest" description="Disordered" evidence="1">
    <location>
        <begin position="1977"/>
        <end position="2028"/>
    </location>
</feature>
<feature type="compositionally biased region" description="Basic and acidic residues" evidence="1">
    <location>
        <begin position="171"/>
        <end position="188"/>
    </location>
</feature>
<feature type="compositionally biased region" description="Basic residues" evidence="1">
    <location>
        <begin position="189"/>
        <end position="199"/>
    </location>
</feature>
<feature type="compositionally biased region" description="Polar residues" evidence="1">
    <location>
        <begin position="203"/>
        <end position="219"/>
    </location>
</feature>
<feature type="compositionally biased region" description="Polar residues" evidence="1">
    <location>
        <begin position="258"/>
        <end position="276"/>
    </location>
</feature>
<feature type="compositionally biased region" description="Basic and acidic residues" evidence="1">
    <location>
        <begin position="366"/>
        <end position="382"/>
    </location>
</feature>
<feature type="compositionally biased region" description="Low complexity" evidence="1">
    <location>
        <begin position="1473"/>
        <end position="1483"/>
    </location>
</feature>
<feature type="compositionally biased region" description="Polar residues" evidence="1">
    <location>
        <begin position="1513"/>
        <end position="1524"/>
    </location>
</feature>
<feature type="compositionally biased region" description="Polar residues" evidence="1">
    <location>
        <begin position="1644"/>
        <end position="1663"/>
    </location>
</feature>
<feature type="compositionally biased region" description="Polar residues" evidence="1">
    <location>
        <begin position="1710"/>
        <end position="1723"/>
    </location>
</feature>
<feature type="compositionally biased region" description="Polar residues" evidence="1">
    <location>
        <begin position="1737"/>
        <end position="1754"/>
    </location>
</feature>
<feature type="compositionally biased region" description="Basic and acidic residues" evidence="1">
    <location>
        <begin position="1922"/>
        <end position="1931"/>
    </location>
</feature>
<feature type="compositionally biased region" description="Polar residues" evidence="1">
    <location>
        <begin position="1981"/>
        <end position="2004"/>
    </location>
</feature>
<feature type="sequence conflict" description="In Ref. 1; AAU93848." evidence="4" ref="1">
    <original>R</original>
    <variation>G</variation>
    <location>
        <position position="140"/>
    </location>
</feature>
<feature type="sequence conflict" description="In Ref. 1; AAU93848." evidence="4" ref="1">
    <original>K</original>
    <variation>R</variation>
    <location>
        <position position="162"/>
    </location>
</feature>
<feature type="sequence conflict" description="In Ref. 1; AAU93848." evidence="4" ref="1">
    <original>L</original>
    <variation>S</variation>
    <location>
        <position position="248"/>
    </location>
</feature>
<feature type="sequence conflict" description="In Ref. 1; AAU93848." evidence="4" ref="1">
    <original>E</original>
    <variation>G</variation>
    <location>
        <position position="292"/>
    </location>
</feature>
<accession>Q5XPK0</accession>
<accession>O49528</accession>
<dbReference type="EMBL" id="AY743923">
    <property type="protein sequence ID" value="AAU93848.1"/>
    <property type="molecule type" value="mRNA"/>
</dbReference>
<dbReference type="EMBL" id="AL021710">
    <property type="protein sequence ID" value="CAA16740.1"/>
    <property type="status" value="ALT_SEQ"/>
    <property type="molecule type" value="Genomic_DNA"/>
</dbReference>
<dbReference type="EMBL" id="AL161549">
    <property type="protein sequence ID" value="CAB78862.1"/>
    <property type="status" value="ALT_SEQ"/>
    <property type="molecule type" value="Genomic_DNA"/>
</dbReference>
<dbReference type="EMBL" id="CP002687">
    <property type="protein sequence ID" value="AEE84067.1"/>
    <property type="molecule type" value="Genomic_DNA"/>
</dbReference>
<dbReference type="PIR" id="T04556">
    <property type="entry name" value="T04556"/>
</dbReference>
<dbReference type="RefSeq" id="NP_193595.3">
    <property type="nucleotide sequence ID" value="NM_117976.4"/>
</dbReference>
<dbReference type="SMR" id="Q5XPK0"/>
<dbReference type="BioGRID" id="12887">
    <property type="interactions" value="3"/>
</dbReference>
<dbReference type="FunCoup" id="Q5XPK0">
    <property type="interactions" value="32"/>
</dbReference>
<dbReference type="IntAct" id="Q5XPK0">
    <property type="interactions" value="3"/>
</dbReference>
<dbReference type="STRING" id="3702.Q5XPK0"/>
<dbReference type="iPTMnet" id="Q5XPK0"/>
<dbReference type="PaxDb" id="3702-AT4G18600.1"/>
<dbReference type="ProteomicsDB" id="232870"/>
<dbReference type="EnsemblPlants" id="AT4G18600.1">
    <property type="protein sequence ID" value="AT4G18600.1"/>
    <property type="gene ID" value="AT4G18600"/>
</dbReference>
<dbReference type="GeneID" id="827594"/>
<dbReference type="Gramene" id="AT4G18600.1">
    <property type="protein sequence ID" value="AT4G18600.1"/>
    <property type="gene ID" value="AT4G18600"/>
</dbReference>
<dbReference type="KEGG" id="ath:AT4G18600"/>
<dbReference type="Araport" id="AT4G18600"/>
<dbReference type="TAIR" id="AT4G18600">
    <property type="gene designation" value="WAVE5"/>
</dbReference>
<dbReference type="eggNOG" id="ENOG502QSPV">
    <property type="taxonomic scope" value="Eukaryota"/>
</dbReference>
<dbReference type="HOGENOM" id="CLU_230242_0_0_1"/>
<dbReference type="InParanoid" id="Q5XPK0"/>
<dbReference type="PRO" id="PR:Q5XPK0"/>
<dbReference type="Proteomes" id="UP000006548">
    <property type="component" value="Chromosome 4"/>
</dbReference>
<dbReference type="ExpressionAtlas" id="Q5XPK0">
    <property type="expression patterns" value="baseline and differential"/>
</dbReference>
<dbReference type="GO" id="GO:0005856">
    <property type="term" value="C:cytoskeleton"/>
    <property type="evidence" value="ECO:0007669"/>
    <property type="project" value="InterPro"/>
</dbReference>
<dbReference type="GO" id="GO:0030036">
    <property type="term" value="P:actin cytoskeleton organization"/>
    <property type="evidence" value="ECO:0007669"/>
    <property type="project" value="InterPro"/>
</dbReference>
<dbReference type="Gene3D" id="1.20.5.340">
    <property type="match status" value="1"/>
</dbReference>
<dbReference type="Gene3D" id="6.10.280.150">
    <property type="match status" value="1"/>
</dbReference>
<dbReference type="InterPro" id="IPR028288">
    <property type="entry name" value="SCAR/WAVE_fam"/>
</dbReference>
<dbReference type="PANTHER" id="PTHR12902:SF29">
    <property type="entry name" value="SCAR-LIKE DOMAIN-CONTAINING PROTEIN WAVE 5"/>
    <property type="match status" value="1"/>
</dbReference>
<dbReference type="PANTHER" id="PTHR12902">
    <property type="entry name" value="WASP-1"/>
    <property type="match status" value="1"/>
</dbReference>
<protein>
    <recommendedName>
        <fullName>Scar-like domain-containing protein WAVE 5</fullName>
    </recommendedName>
</protein>
<evidence type="ECO:0000256" key="1">
    <source>
        <dbReference type="SAM" id="MobiDB-lite"/>
    </source>
</evidence>
<evidence type="ECO:0000269" key="2">
    <source>
    </source>
</evidence>
<evidence type="ECO:0000269" key="3">
    <source>
    </source>
</evidence>
<evidence type="ECO:0000305" key="4"/>
<proteinExistence type="evidence at protein level"/>
<organism>
    <name type="scientific">Arabidopsis thaliana</name>
    <name type="common">Mouse-ear cress</name>
    <dbReference type="NCBI Taxonomy" id="3702"/>
    <lineage>
        <taxon>Eukaryota</taxon>
        <taxon>Viridiplantae</taxon>
        <taxon>Streptophyta</taxon>
        <taxon>Embryophyta</taxon>
        <taxon>Tracheophyta</taxon>
        <taxon>Spermatophyta</taxon>
        <taxon>Magnoliopsida</taxon>
        <taxon>eudicotyledons</taxon>
        <taxon>Gunneridae</taxon>
        <taxon>Pentapetalae</taxon>
        <taxon>rosids</taxon>
        <taxon>malvids</taxon>
        <taxon>Brassicales</taxon>
        <taxon>Brassicaceae</taxon>
        <taxon>Camelineae</taxon>
        <taxon>Arabidopsis</taxon>
    </lineage>
</organism>
<keyword id="KW-1185">Reference proteome</keyword>
<reference key="1">
    <citation type="journal article" date="2004" name="Proc. Natl. Acad. Sci. U.S.A.">
        <title>Activation of Arp2/3 complex-dependent actin polymerization by plant proteins distantly related to Scar/WAVE.</title>
        <authorList>
            <person name="Frank M."/>
            <person name="Egile C."/>
            <person name="Dyachok J."/>
            <person name="Djakovic S."/>
            <person name="Nolasco M."/>
            <person name="Li R."/>
            <person name="Smith L.G."/>
        </authorList>
    </citation>
    <scope>NUCLEOTIDE SEQUENCE [MRNA]</scope>
    <scope>TISSUE SPECIFICITY</scope>
</reference>
<reference key="2">
    <citation type="journal article" date="1999" name="Nature">
        <title>Sequence and analysis of chromosome 4 of the plant Arabidopsis thaliana.</title>
        <authorList>
            <person name="Mayer K.F.X."/>
            <person name="Schueller C."/>
            <person name="Wambutt R."/>
            <person name="Murphy G."/>
            <person name="Volckaert G."/>
            <person name="Pohl T."/>
            <person name="Duesterhoeft A."/>
            <person name="Stiekema W."/>
            <person name="Entian K.-D."/>
            <person name="Terryn N."/>
            <person name="Harris B."/>
            <person name="Ansorge W."/>
            <person name="Brandt P."/>
            <person name="Grivell L.A."/>
            <person name="Rieger M."/>
            <person name="Weichselgartner M."/>
            <person name="de Simone V."/>
            <person name="Obermaier B."/>
            <person name="Mache R."/>
            <person name="Mueller M."/>
            <person name="Kreis M."/>
            <person name="Delseny M."/>
            <person name="Puigdomenech P."/>
            <person name="Watson M."/>
            <person name="Schmidtheini T."/>
            <person name="Reichert B."/>
            <person name="Portetelle D."/>
            <person name="Perez-Alonso M."/>
            <person name="Boutry M."/>
            <person name="Bancroft I."/>
            <person name="Vos P."/>
            <person name="Hoheisel J."/>
            <person name="Zimmermann W."/>
            <person name="Wedler H."/>
            <person name="Ridley P."/>
            <person name="Langham S.-A."/>
            <person name="McCullagh B."/>
            <person name="Bilham L."/>
            <person name="Robben J."/>
            <person name="van der Schueren J."/>
            <person name="Grymonprez B."/>
            <person name="Chuang Y.-J."/>
            <person name="Vandenbussche F."/>
            <person name="Braeken M."/>
            <person name="Weltjens I."/>
            <person name="Voet M."/>
            <person name="Bastiaens I."/>
            <person name="Aert R."/>
            <person name="Defoor E."/>
            <person name="Weitzenegger T."/>
            <person name="Bothe G."/>
            <person name="Ramsperger U."/>
            <person name="Hilbert H."/>
            <person name="Braun M."/>
            <person name="Holzer E."/>
            <person name="Brandt A."/>
            <person name="Peters S."/>
            <person name="van Staveren M."/>
            <person name="Dirkse W."/>
            <person name="Mooijman P."/>
            <person name="Klein Lankhorst R."/>
            <person name="Rose M."/>
            <person name="Hauf J."/>
            <person name="Koetter P."/>
            <person name="Berneiser S."/>
            <person name="Hempel S."/>
            <person name="Feldpausch M."/>
            <person name="Lamberth S."/>
            <person name="Van den Daele H."/>
            <person name="De Keyser A."/>
            <person name="Buysshaert C."/>
            <person name="Gielen J."/>
            <person name="Villarroel R."/>
            <person name="De Clercq R."/>
            <person name="van Montagu M."/>
            <person name="Rogers J."/>
            <person name="Cronin A."/>
            <person name="Quail M.A."/>
            <person name="Bray-Allen S."/>
            <person name="Clark L."/>
            <person name="Doggett J."/>
            <person name="Hall S."/>
            <person name="Kay M."/>
            <person name="Lennard N."/>
            <person name="McLay K."/>
            <person name="Mayes R."/>
            <person name="Pettett A."/>
            <person name="Rajandream M.A."/>
            <person name="Lyne M."/>
            <person name="Benes V."/>
            <person name="Rechmann S."/>
            <person name="Borkova D."/>
            <person name="Bloecker H."/>
            <person name="Scharfe M."/>
            <person name="Grimm M."/>
            <person name="Loehnert T.-H."/>
            <person name="Dose S."/>
            <person name="de Haan M."/>
            <person name="Maarse A.C."/>
            <person name="Schaefer M."/>
            <person name="Mueller-Auer S."/>
            <person name="Gabel C."/>
            <person name="Fuchs M."/>
            <person name="Fartmann B."/>
            <person name="Granderath K."/>
            <person name="Dauner D."/>
            <person name="Herzl A."/>
            <person name="Neumann S."/>
            <person name="Argiriou A."/>
            <person name="Vitale D."/>
            <person name="Liguori R."/>
            <person name="Piravandi E."/>
            <person name="Massenet O."/>
            <person name="Quigley F."/>
            <person name="Clabauld G."/>
            <person name="Muendlein A."/>
            <person name="Felber R."/>
            <person name="Schnabl S."/>
            <person name="Hiller R."/>
            <person name="Schmidt W."/>
            <person name="Lecharny A."/>
            <person name="Aubourg S."/>
            <person name="Chefdor F."/>
            <person name="Cooke R."/>
            <person name="Berger C."/>
            <person name="Monfort A."/>
            <person name="Casacuberta E."/>
            <person name="Gibbons T."/>
            <person name="Weber N."/>
            <person name="Vandenbol M."/>
            <person name="Bargues M."/>
            <person name="Terol J."/>
            <person name="Torres A."/>
            <person name="Perez-Perez A."/>
            <person name="Purnelle B."/>
            <person name="Bent E."/>
            <person name="Johnson S."/>
            <person name="Tacon D."/>
            <person name="Jesse T."/>
            <person name="Heijnen L."/>
            <person name="Schwarz S."/>
            <person name="Scholler P."/>
            <person name="Heber S."/>
            <person name="Francs P."/>
            <person name="Bielke C."/>
            <person name="Frishman D."/>
            <person name="Haase D."/>
            <person name="Lemcke K."/>
            <person name="Mewes H.-W."/>
            <person name="Stocker S."/>
            <person name="Zaccaria P."/>
            <person name="Bevan M."/>
            <person name="Wilson R.K."/>
            <person name="de la Bastide M."/>
            <person name="Habermann K."/>
            <person name="Parnell L."/>
            <person name="Dedhia N."/>
            <person name="Gnoj L."/>
            <person name="Schutz K."/>
            <person name="Huang E."/>
            <person name="Spiegel L."/>
            <person name="Sekhon M."/>
            <person name="Murray J."/>
            <person name="Sheet P."/>
            <person name="Cordes M."/>
            <person name="Abu-Threideh J."/>
            <person name="Stoneking T."/>
            <person name="Kalicki J."/>
            <person name="Graves T."/>
            <person name="Harmon G."/>
            <person name="Edwards J."/>
            <person name="Latreille P."/>
            <person name="Courtney L."/>
            <person name="Cloud J."/>
            <person name="Abbott A."/>
            <person name="Scott K."/>
            <person name="Johnson D."/>
            <person name="Minx P."/>
            <person name="Bentley D."/>
            <person name="Fulton B."/>
            <person name="Miller N."/>
            <person name="Greco T."/>
            <person name="Kemp K."/>
            <person name="Kramer J."/>
            <person name="Fulton L."/>
            <person name="Mardis E."/>
            <person name="Dante M."/>
            <person name="Pepin K."/>
            <person name="Hillier L.W."/>
            <person name="Nelson J."/>
            <person name="Spieth J."/>
            <person name="Ryan E."/>
            <person name="Andrews S."/>
            <person name="Geisel C."/>
            <person name="Layman D."/>
            <person name="Du H."/>
            <person name="Ali J."/>
            <person name="Berghoff A."/>
            <person name="Jones K."/>
            <person name="Drone K."/>
            <person name="Cotton M."/>
            <person name="Joshu C."/>
            <person name="Antonoiu B."/>
            <person name="Zidanic M."/>
            <person name="Strong C."/>
            <person name="Sun H."/>
            <person name="Lamar B."/>
            <person name="Yordan C."/>
            <person name="Ma P."/>
            <person name="Zhong J."/>
            <person name="Preston R."/>
            <person name="Vil D."/>
            <person name="Shekher M."/>
            <person name="Matero A."/>
            <person name="Shah R."/>
            <person name="Swaby I.K."/>
            <person name="O'Shaughnessy A."/>
            <person name="Rodriguez M."/>
            <person name="Hoffman J."/>
            <person name="Till S."/>
            <person name="Granat S."/>
            <person name="Shohdy N."/>
            <person name="Hasegawa A."/>
            <person name="Hameed A."/>
            <person name="Lodhi M."/>
            <person name="Johnson A."/>
            <person name="Chen E."/>
            <person name="Marra M.A."/>
            <person name="Martienssen R."/>
            <person name="McCombie W.R."/>
        </authorList>
    </citation>
    <scope>NUCLEOTIDE SEQUENCE [LARGE SCALE GENOMIC DNA]</scope>
    <source>
        <strain>cv. Columbia</strain>
    </source>
</reference>
<reference key="3">
    <citation type="journal article" date="2017" name="Plant J.">
        <title>Araport11: a complete reannotation of the Arabidopsis thaliana reference genome.</title>
        <authorList>
            <person name="Cheng C.Y."/>
            <person name="Krishnakumar V."/>
            <person name="Chan A.P."/>
            <person name="Thibaud-Nissen F."/>
            <person name="Schobel S."/>
            <person name="Town C.D."/>
        </authorList>
    </citation>
    <scope>GENOME REANNOTATION</scope>
    <source>
        <strain>cv. Columbia</strain>
    </source>
</reference>
<reference key="4">
    <citation type="journal article" date="2007" name="Development">
        <title>The role of Arabidopsis SCAR genes in ARP2-ARP3-dependent cell morphogenesis.</title>
        <authorList>
            <person name="Uhrig J.F."/>
            <person name="Mutondo M."/>
            <person name="Zimmermann I."/>
            <person name="Deeks M.J."/>
            <person name="Machesky L.M."/>
            <person name="Thomas P."/>
            <person name="Uhrig S."/>
            <person name="Rambke C."/>
            <person name="Hussey P.J."/>
            <person name="Huelskamp M."/>
        </authorList>
    </citation>
    <scope>INTERACTION WITH ABI1 AND ABI2</scope>
</reference>